<evidence type="ECO:0000250" key="1"/>
<evidence type="ECO:0000250" key="2">
    <source>
        <dbReference type="UniProtKB" id="O88958"/>
    </source>
</evidence>
<evidence type="ECO:0000250" key="3">
    <source>
        <dbReference type="UniProtKB" id="P46926"/>
    </source>
</evidence>
<evidence type="ECO:0000250" key="4">
    <source>
        <dbReference type="UniProtKB" id="Q9VMP9"/>
    </source>
</evidence>
<evidence type="ECO:0000305" key="5"/>
<evidence type="ECO:0000312" key="6">
    <source>
        <dbReference type="Proteomes" id="UP000001819"/>
    </source>
</evidence>
<keyword id="KW-0119">Carbohydrate metabolism</keyword>
<keyword id="KW-0963">Cytoplasm</keyword>
<keyword id="KW-0378">Hydrolase</keyword>
<keyword id="KW-1185">Reference proteome</keyword>
<accession>Q29NT9</accession>
<organism evidence="6">
    <name type="scientific">Drosophila pseudoobscura pseudoobscura</name>
    <name type="common">Fruit fly</name>
    <dbReference type="NCBI Taxonomy" id="46245"/>
    <lineage>
        <taxon>Eukaryota</taxon>
        <taxon>Metazoa</taxon>
        <taxon>Ecdysozoa</taxon>
        <taxon>Arthropoda</taxon>
        <taxon>Hexapoda</taxon>
        <taxon>Insecta</taxon>
        <taxon>Pterygota</taxon>
        <taxon>Neoptera</taxon>
        <taxon>Endopterygota</taxon>
        <taxon>Diptera</taxon>
        <taxon>Brachycera</taxon>
        <taxon>Muscomorpha</taxon>
        <taxon>Ephydroidea</taxon>
        <taxon>Drosophilidae</taxon>
        <taxon>Drosophila</taxon>
        <taxon>Sophophora</taxon>
    </lineage>
</organism>
<reference key="1">
    <citation type="journal article" date="2005" name="Genome Res.">
        <title>Comparative genome sequencing of Drosophila pseudoobscura: chromosomal, gene, and cis-element evolution.</title>
        <authorList>
            <person name="Richards S."/>
            <person name="Liu Y."/>
            <person name="Bettencourt B.R."/>
            <person name="Hradecky P."/>
            <person name="Letovsky S."/>
            <person name="Nielsen R."/>
            <person name="Thornton K."/>
            <person name="Hubisz M.J."/>
            <person name="Chen R."/>
            <person name="Meisel R.P."/>
            <person name="Couronne O."/>
            <person name="Hua S."/>
            <person name="Smith M.A."/>
            <person name="Zhang P."/>
            <person name="Liu J."/>
            <person name="Bussemaker H.J."/>
            <person name="van Batenburg M.F."/>
            <person name="Howells S.L."/>
            <person name="Scherer S.E."/>
            <person name="Sodergren E."/>
            <person name="Matthews B.B."/>
            <person name="Crosby M.A."/>
            <person name="Schroeder A.J."/>
            <person name="Ortiz-Barrientos D."/>
            <person name="Rives C.M."/>
            <person name="Metzker M.L."/>
            <person name="Muzny D.M."/>
            <person name="Scott G."/>
            <person name="Steffen D."/>
            <person name="Wheeler D.A."/>
            <person name="Worley K.C."/>
            <person name="Havlak P."/>
            <person name="Durbin K.J."/>
            <person name="Egan A."/>
            <person name="Gill R."/>
            <person name="Hume J."/>
            <person name="Morgan M.B."/>
            <person name="Miner G."/>
            <person name="Hamilton C."/>
            <person name="Huang Y."/>
            <person name="Waldron L."/>
            <person name="Verduzco D."/>
            <person name="Clerc-Blankenburg K.P."/>
            <person name="Dubchak I."/>
            <person name="Noor M.A.F."/>
            <person name="Anderson W."/>
            <person name="White K.P."/>
            <person name="Clark A.G."/>
            <person name="Schaeffer S.W."/>
            <person name="Gelbart W.M."/>
            <person name="Weinstock G.M."/>
            <person name="Gibbs R.A."/>
        </authorList>
    </citation>
    <scope>NUCLEOTIDE SEQUENCE [LARGE SCALE GENOMIC DNA]</scope>
    <source>
        <strain>MV2-25 / Tucson 14011-0121.94</strain>
    </source>
</reference>
<sequence length="274" mass="30927">MRLVILETSQSVGKWAAKYVMKRINDFQPGPNRYFVLGLPTGSTPLGMYKELIEFHKQGKVSFQYVKTFNMDEYVGLPRDHQESYHFFMWHNFFKHIDIEPQNVHILNGNAPDLVAECNKFEEQIKEAGGVELFIGGIGPDGHIAFNEPGSSLVSRTRVKTLAQDTLEANARFFDNDMSKVPKQALTVGVGTVMDSKEVMILITGAHKAFALYKAIEEGVNHMWTVSAFQQHANTLMICDEDATLELRVKTVKYFKGILRDIDEGAATQDGYKN</sequence>
<name>GNPI_DROPS</name>
<comment type="function">
    <text evidence="3">Catalyzes the reversible conversion of alpha-D-glucosamine 6-phosphate (GlcN-6P) into beta-D-fructose 6-phosphate (Fru-6P) and ammonium ion, a regulatory reaction step in de novo uridine diphosphate-N-acetyl-alpha-D-glucosamine (UDP-GlcNAc) biosynthesis via hexosamine pathway.</text>
</comment>
<comment type="catalytic activity">
    <reaction evidence="3">
        <text>alpha-D-glucosamine 6-phosphate + H2O = beta-D-fructose 6-phosphate + NH4(+)</text>
        <dbReference type="Rhea" id="RHEA:12172"/>
        <dbReference type="ChEBI" id="CHEBI:15377"/>
        <dbReference type="ChEBI" id="CHEBI:28938"/>
        <dbReference type="ChEBI" id="CHEBI:57634"/>
        <dbReference type="ChEBI" id="CHEBI:75989"/>
        <dbReference type="EC" id="3.5.99.6"/>
    </reaction>
</comment>
<comment type="pathway">
    <text evidence="3">Nucleotide-sugar biosynthesis; UDP-N-acetyl-alpha-D-glucosamine biosynthesis; alpha-D-glucosamine 6-phosphate from D-fructose 6-phosphate: step 1/1.</text>
</comment>
<comment type="subunit">
    <text evidence="3">Homohexamer.</text>
</comment>
<comment type="subcellular location">
    <subcellularLocation>
        <location evidence="2">Cytoplasm</location>
    </subcellularLocation>
</comment>
<comment type="similarity">
    <text evidence="5">Belongs to the glucosamine/galactosamine-6-phosphate isomerase family.</text>
</comment>
<comment type="sequence caution" evidence="5">
    <conflict type="erroneous gene model prediction">
        <sequence resource="EMBL-CDS" id="EAL34555"/>
    </conflict>
</comment>
<proteinExistence type="inferred from homology"/>
<protein>
    <recommendedName>
        <fullName evidence="4">Glucosamine-6-phosphate deaminase</fullName>
        <shortName>GlcN6P deaminase</shortName>
        <ecNumber evidence="3">3.5.99.6</ecNumber>
    </recommendedName>
    <alternativeName>
        <fullName evidence="4">Glucosamine-6-phosphate isomerase</fullName>
        <shortName evidence="5">GNPI</shortName>
    </alternativeName>
    <alternativeName>
        <fullName evidence="4">Protein oscillin</fullName>
    </alternativeName>
</protein>
<feature type="chain" id="PRO_0000328092" description="Glucosamine-6-phosphate deaminase">
    <location>
        <begin position="1"/>
        <end position="274"/>
    </location>
</feature>
<feature type="active site" description="Proton acceptor; for enolization step" evidence="1">
    <location>
        <position position="72"/>
    </location>
</feature>
<feature type="active site" description="For ring-opening step" evidence="1">
    <location>
        <position position="141"/>
    </location>
</feature>
<feature type="active site" description="Proton acceptor; for ring-opening step" evidence="1">
    <location>
        <position position="143"/>
    </location>
</feature>
<feature type="active site" description="For ring-opening step" evidence="1">
    <location>
        <position position="148"/>
    </location>
</feature>
<dbReference type="EC" id="3.5.99.6" evidence="3"/>
<dbReference type="EMBL" id="CH379058">
    <property type="protein sequence ID" value="EAL34555.1"/>
    <property type="status" value="ALT_SEQ"/>
    <property type="molecule type" value="Genomic_DNA"/>
</dbReference>
<dbReference type="RefSeq" id="XP_001357485.1">
    <property type="nucleotide sequence ID" value="XM_001357449.3"/>
</dbReference>
<dbReference type="SMR" id="Q29NT9"/>
<dbReference type="FunCoup" id="Q29NT9">
    <property type="interactions" value="786"/>
</dbReference>
<dbReference type="STRING" id="46245.Q29NT9"/>
<dbReference type="EnsemblMetazoa" id="FBtr0281052">
    <property type="protein sequence ID" value="FBpp0279490"/>
    <property type="gene ID" value="FBgn0079979"/>
</dbReference>
<dbReference type="GeneID" id="4817879"/>
<dbReference type="KEGG" id="dpo:4817879"/>
<dbReference type="CTD" id="33783"/>
<dbReference type="eggNOG" id="KOG3148">
    <property type="taxonomic scope" value="Eukaryota"/>
</dbReference>
<dbReference type="HOGENOM" id="CLU_049611_0_1_1"/>
<dbReference type="InParanoid" id="Q29NT9"/>
<dbReference type="OMA" id="HVITQGI"/>
<dbReference type="PhylomeDB" id="Q29NT9"/>
<dbReference type="UniPathway" id="UPA00113">
    <property type="reaction ID" value="UER00528"/>
</dbReference>
<dbReference type="Proteomes" id="UP000001819">
    <property type="component" value="Chromosome 4"/>
</dbReference>
<dbReference type="Bgee" id="FBgn0079979">
    <property type="expression patterns" value="Expressed in male reproductive system and 2 other cell types or tissues"/>
</dbReference>
<dbReference type="ExpressionAtlas" id="Q29NT9">
    <property type="expression patterns" value="baseline"/>
</dbReference>
<dbReference type="GO" id="GO:0005737">
    <property type="term" value="C:cytoplasm"/>
    <property type="evidence" value="ECO:0000250"/>
    <property type="project" value="UniProtKB"/>
</dbReference>
<dbReference type="GO" id="GO:0004342">
    <property type="term" value="F:glucosamine-6-phosphate deaminase activity"/>
    <property type="evidence" value="ECO:0000250"/>
    <property type="project" value="UniProtKB"/>
</dbReference>
<dbReference type="GO" id="GO:0042802">
    <property type="term" value="F:identical protein binding"/>
    <property type="evidence" value="ECO:0007669"/>
    <property type="project" value="TreeGrafter"/>
</dbReference>
<dbReference type="GO" id="GO:0005975">
    <property type="term" value="P:carbohydrate metabolic process"/>
    <property type="evidence" value="ECO:0007669"/>
    <property type="project" value="InterPro"/>
</dbReference>
<dbReference type="GO" id="GO:0006091">
    <property type="term" value="P:generation of precursor metabolites and energy"/>
    <property type="evidence" value="ECO:0000250"/>
    <property type="project" value="UniProtKB"/>
</dbReference>
<dbReference type="GO" id="GO:0006043">
    <property type="term" value="P:glucosamine catabolic process"/>
    <property type="evidence" value="ECO:0000250"/>
    <property type="project" value="UniProtKB"/>
</dbReference>
<dbReference type="GO" id="GO:0006046">
    <property type="term" value="P:N-acetylglucosamine catabolic process"/>
    <property type="evidence" value="ECO:0007669"/>
    <property type="project" value="TreeGrafter"/>
</dbReference>
<dbReference type="GO" id="GO:0019262">
    <property type="term" value="P:N-acetylneuraminate catabolic process"/>
    <property type="evidence" value="ECO:0007669"/>
    <property type="project" value="TreeGrafter"/>
</dbReference>
<dbReference type="CDD" id="cd01399">
    <property type="entry name" value="GlcN6P_deaminase"/>
    <property type="match status" value="1"/>
</dbReference>
<dbReference type="FunFam" id="3.40.50.1360:FF:000004">
    <property type="entry name" value="Glucosamine-6-phosphate isomerase"/>
    <property type="match status" value="1"/>
</dbReference>
<dbReference type="Gene3D" id="3.40.50.1360">
    <property type="match status" value="1"/>
</dbReference>
<dbReference type="HAMAP" id="MF_01241">
    <property type="entry name" value="GlcN6P_deamin"/>
    <property type="match status" value="1"/>
</dbReference>
<dbReference type="InterPro" id="IPR006148">
    <property type="entry name" value="Glc/Gal-6P_isomerase"/>
</dbReference>
<dbReference type="InterPro" id="IPR004547">
    <property type="entry name" value="Glucosamine6P_isomerase"/>
</dbReference>
<dbReference type="InterPro" id="IPR018321">
    <property type="entry name" value="Glucosamine6P_isomerase_CS"/>
</dbReference>
<dbReference type="InterPro" id="IPR037171">
    <property type="entry name" value="NagB/RpiA_transferase-like"/>
</dbReference>
<dbReference type="NCBIfam" id="TIGR00502">
    <property type="entry name" value="nagB"/>
    <property type="match status" value="1"/>
</dbReference>
<dbReference type="PANTHER" id="PTHR11280">
    <property type="entry name" value="GLUCOSAMINE-6-PHOSPHATE ISOMERASE"/>
    <property type="match status" value="1"/>
</dbReference>
<dbReference type="PANTHER" id="PTHR11280:SF5">
    <property type="entry name" value="GLUCOSAMINE-6-PHOSPHATE ISOMERASE"/>
    <property type="match status" value="1"/>
</dbReference>
<dbReference type="Pfam" id="PF01182">
    <property type="entry name" value="Glucosamine_iso"/>
    <property type="match status" value="1"/>
</dbReference>
<dbReference type="SUPFAM" id="SSF100950">
    <property type="entry name" value="NagB/RpiA/CoA transferase-like"/>
    <property type="match status" value="1"/>
</dbReference>
<dbReference type="PROSITE" id="PS01161">
    <property type="entry name" value="GLC_GALNAC_ISOMERASE"/>
    <property type="match status" value="1"/>
</dbReference>
<gene>
    <name evidence="4" type="primary">Gnpda</name>
    <name type="synonym">Gnpda1</name>
    <name evidence="4" type="synonym">Oscillin</name>
    <name type="ORF">GA19983</name>
</gene>